<name>RL3_RENSM</name>
<sequence>MTAIRNVKGILGTKLGMTQVWDENNKLVPVTVVQADSNVVTQLRDAAKDGYTAVQIGYGQIDPRKVTKPLAGHFEKAGVTPRRHVVELRTNDSDAYSLGQELSVEIFEAGQKVDVVGTSKGKGFAGVMKRHGFHGVGASHGAHKNHRKPGSIGGASTPSRVFKGLKMAGRMGGERHTTLNLTVHAIDAEKSLLLIKGAIPGARGRVVLVRTAVKTTVKGA</sequence>
<keyword id="KW-1185">Reference proteome</keyword>
<keyword id="KW-0687">Ribonucleoprotein</keyword>
<keyword id="KW-0689">Ribosomal protein</keyword>
<keyword id="KW-0694">RNA-binding</keyword>
<keyword id="KW-0699">rRNA-binding</keyword>
<evidence type="ECO:0000255" key="1">
    <source>
        <dbReference type="HAMAP-Rule" id="MF_01325"/>
    </source>
</evidence>
<evidence type="ECO:0000256" key="2">
    <source>
        <dbReference type="SAM" id="MobiDB-lite"/>
    </source>
</evidence>
<evidence type="ECO:0000305" key="3"/>
<protein>
    <recommendedName>
        <fullName evidence="1">Large ribosomal subunit protein uL3</fullName>
    </recommendedName>
    <alternativeName>
        <fullName evidence="3">50S ribosomal protein L3</fullName>
    </alternativeName>
</protein>
<comment type="function">
    <text evidence="1">One of the primary rRNA binding proteins, it binds directly near the 3'-end of the 23S rRNA, where it nucleates assembly of the 50S subunit.</text>
</comment>
<comment type="subunit">
    <text evidence="1">Part of the 50S ribosomal subunit. Forms a cluster with proteins L14 and L19.</text>
</comment>
<comment type="similarity">
    <text evidence="1">Belongs to the universal ribosomal protein uL3 family.</text>
</comment>
<proteinExistence type="inferred from homology"/>
<reference key="1">
    <citation type="journal article" date="2008" name="J. Bacteriol.">
        <title>Genome sequence of the fish pathogen Renibacterium salmoninarum suggests reductive evolution away from an environmental Arthrobacter ancestor.</title>
        <authorList>
            <person name="Wiens G.D."/>
            <person name="Rockey D.D."/>
            <person name="Wu Z."/>
            <person name="Chang J."/>
            <person name="Levy R."/>
            <person name="Crane S."/>
            <person name="Chen D.S."/>
            <person name="Capri G.R."/>
            <person name="Burnett J.R."/>
            <person name="Sudheesh P.S."/>
            <person name="Schipma M.J."/>
            <person name="Burd H."/>
            <person name="Bhattacharyya A."/>
            <person name="Rhodes L.D."/>
            <person name="Kaul R."/>
            <person name="Strom M.S."/>
        </authorList>
    </citation>
    <scope>NUCLEOTIDE SEQUENCE [LARGE SCALE GENOMIC DNA]</scope>
    <source>
        <strain>ATCC 33209 / DSM 20767 / JCM 11484 / NBRC 15589 / NCIMB 2235</strain>
    </source>
</reference>
<gene>
    <name evidence="1" type="primary">rplC</name>
    <name type="ordered locus">RSal33209_2165</name>
</gene>
<feature type="chain" id="PRO_1000086455" description="Large ribosomal subunit protein uL3">
    <location>
        <begin position="1"/>
        <end position="220"/>
    </location>
</feature>
<feature type="region of interest" description="Disordered" evidence="2">
    <location>
        <begin position="137"/>
        <end position="159"/>
    </location>
</feature>
<dbReference type="EMBL" id="CP000910">
    <property type="protein sequence ID" value="ABY23897.1"/>
    <property type="molecule type" value="Genomic_DNA"/>
</dbReference>
<dbReference type="RefSeq" id="WP_012245563.1">
    <property type="nucleotide sequence ID" value="NC_010168.1"/>
</dbReference>
<dbReference type="SMR" id="A9WSV9"/>
<dbReference type="STRING" id="288705.RSal33209_2165"/>
<dbReference type="KEGG" id="rsa:RSal33209_2165"/>
<dbReference type="eggNOG" id="COG0087">
    <property type="taxonomic scope" value="Bacteria"/>
</dbReference>
<dbReference type="HOGENOM" id="CLU_044142_4_1_11"/>
<dbReference type="Proteomes" id="UP000002007">
    <property type="component" value="Chromosome"/>
</dbReference>
<dbReference type="GO" id="GO:0022625">
    <property type="term" value="C:cytosolic large ribosomal subunit"/>
    <property type="evidence" value="ECO:0007669"/>
    <property type="project" value="TreeGrafter"/>
</dbReference>
<dbReference type="GO" id="GO:0019843">
    <property type="term" value="F:rRNA binding"/>
    <property type="evidence" value="ECO:0007669"/>
    <property type="project" value="UniProtKB-UniRule"/>
</dbReference>
<dbReference type="GO" id="GO:0003735">
    <property type="term" value="F:structural constituent of ribosome"/>
    <property type="evidence" value="ECO:0007669"/>
    <property type="project" value="InterPro"/>
</dbReference>
<dbReference type="GO" id="GO:0006412">
    <property type="term" value="P:translation"/>
    <property type="evidence" value="ECO:0007669"/>
    <property type="project" value="UniProtKB-UniRule"/>
</dbReference>
<dbReference type="FunFam" id="2.40.30.10:FF:000004">
    <property type="entry name" value="50S ribosomal protein L3"/>
    <property type="match status" value="1"/>
</dbReference>
<dbReference type="FunFam" id="3.30.160.810:FF:000001">
    <property type="entry name" value="50S ribosomal protein L3"/>
    <property type="match status" value="1"/>
</dbReference>
<dbReference type="Gene3D" id="3.30.160.810">
    <property type="match status" value="1"/>
</dbReference>
<dbReference type="Gene3D" id="2.40.30.10">
    <property type="entry name" value="Translation factors"/>
    <property type="match status" value="1"/>
</dbReference>
<dbReference type="HAMAP" id="MF_01325_B">
    <property type="entry name" value="Ribosomal_uL3_B"/>
    <property type="match status" value="1"/>
</dbReference>
<dbReference type="InterPro" id="IPR000597">
    <property type="entry name" value="Ribosomal_uL3"/>
</dbReference>
<dbReference type="InterPro" id="IPR019927">
    <property type="entry name" value="Ribosomal_uL3_bac/org-type"/>
</dbReference>
<dbReference type="InterPro" id="IPR019926">
    <property type="entry name" value="Ribosomal_uL3_CS"/>
</dbReference>
<dbReference type="InterPro" id="IPR009000">
    <property type="entry name" value="Transl_B-barrel_sf"/>
</dbReference>
<dbReference type="NCBIfam" id="TIGR03625">
    <property type="entry name" value="L3_bact"/>
    <property type="match status" value="1"/>
</dbReference>
<dbReference type="PANTHER" id="PTHR11229">
    <property type="entry name" value="50S RIBOSOMAL PROTEIN L3"/>
    <property type="match status" value="1"/>
</dbReference>
<dbReference type="PANTHER" id="PTHR11229:SF16">
    <property type="entry name" value="LARGE RIBOSOMAL SUBUNIT PROTEIN UL3C"/>
    <property type="match status" value="1"/>
</dbReference>
<dbReference type="Pfam" id="PF00297">
    <property type="entry name" value="Ribosomal_L3"/>
    <property type="match status" value="1"/>
</dbReference>
<dbReference type="SUPFAM" id="SSF50447">
    <property type="entry name" value="Translation proteins"/>
    <property type="match status" value="1"/>
</dbReference>
<dbReference type="PROSITE" id="PS00474">
    <property type="entry name" value="RIBOSOMAL_L3"/>
    <property type="match status" value="1"/>
</dbReference>
<accession>A9WSV9</accession>
<organism>
    <name type="scientific">Renibacterium salmoninarum (strain ATCC 33209 / DSM 20767 / JCM 11484 / NBRC 15589 / NCIMB 2235)</name>
    <dbReference type="NCBI Taxonomy" id="288705"/>
    <lineage>
        <taxon>Bacteria</taxon>
        <taxon>Bacillati</taxon>
        <taxon>Actinomycetota</taxon>
        <taxon>Actinomycetes</taxon>
        <taxon>Micrococcales</taxon>
        <taxon>Micrococcaceae</taxon>
        <taxon>Renibacterium</taxon>
    </lineage>
</organism>